<proteinExistence type="evidence at transcript level"/>
<sequence length="461" mass="51107">MCWLLLWGILHTCPTQASVLLAQQFPQQLTSPGYPEPYIKGQESHADIEAPEGFAVRLIFQDFDLEPSPGCEGDSVTISTRGTDATRLCGQQGSSLGSPPNQMEFVSSGRSLRLTFRAHSSKNKVTHLHKGFLALYQAAVSQPNGDAEAFTTPGANPPEIQNHCPGPYYKEEQTGTLSCPSSRKWKDRQRGEEVPECVPVCGRPVVPIAENPNTFGSSRAKPGNFPWQAFTSIYGRGGGALLGDRWILTAAHTIFPKDSIYLRKNKTVNVFLGHTDVDELLKLGNHPVRRVVVHPDYRQEESHNFDGDIALLELEHRVPLGPSLLPVCLPDNETLYHSGLWGYISGFGVEMGWLTTKLKYSKLPVAPREACEAWLRQRQRTEVFSDNMFCVGEEMQVNSVCQGDSGSVYVVWDDRALRWVATGIVSWGVGCGKGYGFYTKVLSYVDWIKGVIECKDRCPEA</sequence>
<organism>
    <name type="scientific">Rattus norvegicus</name>
    <name type="common">Rat</name>
    <dbReference type="NCBI Taxonomy" id="10116"/>
    <lineage>
        <taxon>Eukaryota</taxon>
        <taxon>Metazoa</taxon>
        <taxon>Chordata</taxon>
        <taxon>Craniata</taxon>
        <taxon>Vertebrata</taxon>
        <taxon>Euteleostomi</taxon>
        <taxon>Mammalia</taxon>
        <taxon>Eutheria</taxon>
        <taxon>Euarchontoglires</taxon>
        <taxon>Glires</taxon>
        <taxon>Rodentia</taxon>
        <taxon>Myomorpha</taxon>
        <taxon>Muroidea</taxon>
        <taxon>Muridae</taxon>
        <taxon>Murinae</taxon>
        <taxon>Rattus</taxon>
    </lineage>
</organism>
<feature type="signal peptide" evidence="2">
    <location>
        <begin position="1"/>
        <end position="22"/>
    </location>
</feature>
<feature type="chain" id="PRO_5000095981" description="Complement C1r subcomponent-like protein">
    <location>
        <begin position="23"/>
        <end position="461"/>
    </location>
</feature>
<feature type="domain" description="CUB" evidence="3">
    <location>
        <begin position="23"/>
        <end position="139"/>
    </location>
</feature>
<feature type="domain" description="Sushi" evidence="2">
    <location>
        <begin position="138"/>
        <end position="199"/>
    </location>
</feature>
<feature type="domain" description="Peptidase S1" evidence="4">
    <location>
        <begin position="214"/>
        <end position="453"/>
    </location>
</feature>
<feature type="active site" description="Charge relay system" evidence="1">
    <location>
        <position position="252"/>
    </location>
</feature>
<feature type="active site" description="Charge relay system" evidence="1">
    <location>
        <position position="308"/>
    </location>
</feature>
<feature type="active site" description="Charge relay system" evidence="1">
    <location>
        <position position="405"/>
    </location>
</feature>
<feature type="glycosylation site" description="N-linked (GlcNAc...) asparagine" evidence="2">
    <location>
        <position position="265"/>
    </location>
</feature>
<feature type="glycosylation site" description="N-linked (GlcNAc...) asparagine" evidence="2">
    <location>
        <position position="332"/>
    </location>
</feature>
<feature type="disulfide bond" evidence="1">
    <location>
        <begin position="71"/>
        <end position="89"/>
    </location>
</feature>
<feature type="disulfide bond" evidence="2">
    <location>
        <begin position="164"/>
        <end position="197"/>
    </location>
</feature>
<feature type="disulfide bond" evidence="1">
    <location>
        <begin position="371"/>
        <end position="390"/>
    </location>
</feature>
<feature type="disulfide bond" evidence="1">
    <location>
        <begin position="401"/>
        <end position="431"/>
    </location>
</feature>
<reference key="1">
    <citation type="journal article" date="2004" name="Nature">
        <title>Genome sequence of the Brown Norway rat yields insights into mammalian evolution.</title>
        <authorList>
            <person name="Gibbs R.A."/>
            <person name="Weinstock G.M."/>
            <person name="Metzker M.L."/>
            <person name="Muzny D.M."/>
            <person name="Sodergren E.J."/>
            <person name="Scherer S."/>
            <person name="Scott G."/>
            <person name="Steffen D."/>
            <person name="Worley K.C."/>
            <person name="Burch P.E."/>
            <person name="Okwuonu G."/>
            <person name="Hines S."/>
            <person name="Lewis L."/>
            <person name="Deramo C."/>
            <person name="Delgado O."/>
            <person name="Dugan-Rocha S."/>
            <person name="Miner G."/>
            <person name="Morgan M."/>
            <person name="Hawes A."/>
            <person name="Gill R."/>
            <person name="Holt R.A."/>
            <person name="Adams M.D."/>
            <person name="Amanatides P.G."/>
            <person name="Baden-Tillson H."/>
            <person name="Barnstead M."/>
            <person name="Chin S."/>
            <person name="Evans C.A."/>
            <person name="Ferriera S."/>
            <person name="Fosler C."/>
            <person name="Glodek A."/>
            <person name="Gu Z."/>
            <person name="Jennings D."/>
            <person name="Kraft C.L."/>
            <person name="Nguyen T."/>
            <person name="Pfannkoch C.M."/>
            <person name="Sitter C."/>
            <person name="Sutton G.G."/>
            <person name="Venter J.C."/>
            <person name="Woodage T."/>
            <person name="Smith D."/>
            <person name="Lee H.-M."/>
            <person name="Gustafson E."/>
            <person name="Cahill P."/>
            <person name="Kana A."/>
            <person name="Doucette-Stamm L."/>
            <person name="Weinstock K."/>
            <person name="Fechtel K."/>
            <person name="Weiss R.B."/>
            <person name="Dunn D.M."/>
            <person name="Green E.D."/>
            <person name="Blakesley R.W."/>
            <person name="Bouffard G.G."/>
            <person name="De Jong P.J."/>
            <person name="Osoegawa K."/>
            <person name="Zhu B."/>
            <person name="Marra M."/>
            <person name="Schein J."/>
            <person name="Bosdet I."/>
            <person name="Fjell C."/>
            <person name="Jones S."/>
            <person name="Krzywinski M."/>
            <person name="Mathewson C."/>
            <person name="Siddiqui A."/>
            <person name="Wye N."/>
            <person name="McPherson J."/>
            <person name="Zhao S."/>
            <person name="Fraser C.M."/>
            <person name="Shetty J."/>
            <person name="Shatsman S."/>
            <person name="Geer K."/>
            <person name="Chen Y."/>
            <person name="Abramzon S."/>
            <person name="Nierman W.C."/>
            <person name="Havlak P.H."/>
            <person name="Chen R."/>
            <person name="Durbin K.J."/>
            <person name="Egan A."/>
            <person name="Ren Y."/>
            <person name="Song X.-Z."/>
            <person name="Li B."/>
            <person name="Liu Y."/>
            <person name="Qin X."/>
            <person name="Cawley S."/>
            <person name="Cooney A.J."/>
            <person name="D'Souza L.M."/>
            <person name="Martin K."/>
            <person name="Wu J.Q."/>
            <person name="Gonzalez-Garay M.L."/>
            <person name="Jackson A.R."/>
            <person name="Kalafus K.J."/>
            <person name="McLeod M.P."/>
            <person name="Milosavljevic A."/>
            <person name="Virk D."/>
            <person name="Volkov A."/>
            <person name="Wheeler D.A."/>
            <person name="Zhang Z."/>
            <person name="Bailey J.A."/>
            <person name="Eichler E.E."/>
            <person name="Tuzun E."/>
            <person name="Birney E."/>
            <person name="Mongin E."/>
            <person name="Ureta-Vidal A."/>
            <person name="Woodwark C."/>
            <person name="Zdobnov E."/>
            <person name="Bork P."/>
            <person name="Suyama M."/>
            <person name="Torrents D."/>
            <person name="Alexandersson M."/>
            <person name="Trask B.J."/>
            <person name="Young J.M."/>
            <person name="Huang H."/>
            <person name="Wang H."/>
            <person name="Xing H."/>
            <person name="Daniels S."/>
            <person name="Gietzen D."/>
            <person name="Schmidt J."/>
            <person name="Stevens K."/>
            <person name="Vitt U."/>
            <person name="Wingrove J."/>
            <person name="Camara F."/>
            <person name="Mar Alba M."/>
            <person name="Abril J.F."/>
            <person name="Guigo R."/>
            <person name="Smit A."/>
            <person name="Dubchak I."/>
            <person name="Rubin E.M."/>
            <person name="Couronne O."/>
            <person name="Poliakov A."/>
            <person name="Huebner N."/>
            <person name="Ganten D."/>
            <person name="Goesele C."/>
            <person name="Hummel O."/>
            <person name="Kreitler T."/>
            <person name="Lee Y.-A."/>
            <person name="Monti J."/>
            <person name="Schulz H."/>
            <person name="Zimdahl H."/>
            <person name="Himmelbauer H."/>
            <person name="Lehrach H."/>
            <person name="Jacob H.J."/>
            <person name="Bromberg S."/>
            <person name="Gullings-Handley J."/>
            <person name="Jensen-Seaman M.I."/>
            <person name="Kwitek A.E."/>
            <person name="Lazar J."/>
            <person name="Pasko D."/>
            <person name="Tonellato P.J."/>
            <person name="Twigger S."/>
            <person name="Ponting C.P."/>
            <person name="Duarte J.M."/>
            <person name="Rice S."/>
            <person name="Goodstadt L."/>
            <person name="Beatson S.A."/>
            <person name="Emes R.D."/>
            <person name="Winter E.E."/>
            <person name="Webber C."/>
            <person name="Brandt P."/>
            <person name="Nyakatura G."/>
            <person name="Adetobi M."/>
            <person name="Chiaromonte F."/>
            <person name="Elnitski L."/>
            <person name="Eswara P."/>
            <person name="Hardison R.C."/>
            <person name="Hou M."/>
            <person name="Kolbe D."/>
            <person name="Makova K."/>
            <person name="Miller W."/>
            <person name="Nekrutenko A."/>
            <person name="Riemer C."/>
            <person name="Schwartz S."/>
            <person name="Taylor J."/>
            <person name="Yang S."/>
            <person name="Zhang Y."/>
            <person name="Lindpaintner K."/>
            <person name="Andrews T.D."/>
            <person name="Caccamo M."/>
            <person name="Clamp M."/>
            <person name="Clarke L."/>
            <person name="Curwen V."/>
            <person name="Durbin R.M."/>
            <person name="Eyras E."/>
            <person name="Searle S.M."/>
            <person name="Cooper G.M."/>
            <person name="Batzoglou S."/>
            <person name="Brudno M."/>
            <person name="Sidow A."/>
            <person name="Stone E.A."/>
            <person name="Payseur B.A."/>
            <person name="Bourque G."/>
            <person name="Lopez-Otin C."/>
            <person name="Puente X.S."/>
            <person name="Chakrabarti K."/>
            <person name="Chatterji S."/>
            <person name="Dewey C."/>
            <person name="Pachter L."/>
            <person name="Bray N."/>
            <person name="Yap V.B."/>
            <person name="Caspi A."/>
            <person name="Tesler G."/>
            <person name="Pevzner P.A."/>
            <person name="Haussler D."/>
            <person name="Roskin K.M."/>
            <person name="Baertsch R."/>
            <person name="Clawson H."/>
            <person name="Furey T.S."/>
            <person name="Hinrichs A.S."/>
            <person name="Karolchik D."/>
            <person name="Kent W.J."/>
            <person name="Rosenbloom K.R."/>
            <person name="Trumbower H."/>
            <person name="Weirauch M."/>
            <person name="Cooper D.N."/>
            <person name="Stenson P.D."/>
            <person name="Ma B."/>
            <person name="Brent M."/>
            <person name="Arumugam M."/>
            <person name="Shteynberg D."/>
            <person name="Copley R.R."/>
            <person name="Taylor M.S."/>
            <person name="Riethman H."/>
            <person name="Mudunuri U."/>
            <person name="Peterson J."/>
            <person name="Guyer M."/>
            <person name="Felsenfeld A."/>
            <person name="Old S."/>
            <person name="Mockrin S."/>
            <person name="Collins F.S."/>
        </authorList>
    </citation>
    <scope>NUCLEOTIDE SEQUENCE [LARGE SCALE GENOMIC DNA]</scope>
    <source>
        <strain>Brown Norway</strain>
    </source>
</reference>
<reference key="2">
    <citation type="journal article" date="2004" name="Genome Res.">
        <title>A genomic analysis of rat proteases and protease inhibitors.</title>
        <authorList>
            <person name="Puente X.S."/>
            <person name="Lopez-Otin C."/>
        </authorList>
    </citation>
    <scope>IDENTIFICATION</scope>
    <source>
        <strain>Sprague-Dawley</strain>
    </source>
</reference>
<keyword id="KW-0180">Complement pathway</keyword>
<keyword id="KW-1015">Disulfide bond</keyword>
<keyword id="KW-0325">Glycoprotein</keyword>
<keyword id="KW-0378">Hydrolase</keyword>
<keyword id="KW-0391">Immunity</keyword>
<keyword id="KW-0399">Innate immunity</keyword>
<keyword id="KW-0645">Protease</keyword>
<keyword id="KW-1185">Reference proteome</keyword>
<keyword id="KW-0964">Secreted</keyword>
<keyword id="KW-0720">Serine protease</keyword>
<keyword id="KW-0732">Signal</keyword>
<keyword id="KW-0768">Sushi</keyword>
<dbReference type="EC" id="3.4.21.-"/>
<dbReference type="EMBL" id="AABR03032669">
    <property type="status" value="NOT_ANNOTATED_CDS"/>
    <property type="molecule type" value="Genomic_DNA"/>
</dbReference>
<dbReference type="EMBL" id="BN000329">
    <property type="protein sequence ID" value="CAE48384.1"/>
    <property type="molecule type" value="mRNA"/>
</dbReference>
<dbReference type="RefSeq" id="NP_001002804.1">
    <property type="nucleotide sequence ID" value="NM_001002804.1"/>
</dbReference>
<dbReference type="SMR" id="Q6IE64"/>
<dbReference type="FunCoup" id="Q6IE64">
    <property type="interactions" value="105"/>
</dbReference>
<dbReference type="STRING" id="10116.ENSRNOP00000015679"/>
<dbReference type="MEROPS" id="S01.189"/>
<dbReference type="GlyCosmos" id="Q6IE64">
    <property type="glycosylation" value="2 sites, No reported glycans"/>
</dbReference>
<dbReference type="GlyGen" id="Q6IE64">
    <property type="glycosylation" value="2 sites"/>
</dbReference>
<dbReference type="PhosphoSitePlus" id="Q6IE64"/>
<dbReference type="PaxDb" id="10116-ENSRNOP00000015679"/>
<dbReference type="GeneID" id="408246"/>
<dbReference type="KEGG" id="rno:408246"/>
<dbReference type="UCSC" id="RGD:1302936">
    <property type="organism name" value="rat"/>
</dbReference>
<dbReference type="AGR" id="RGD:1302936"/>
<dbReference type="CTD" id="51279"/>
<dbReference type="RGD" id="1302936">
    <property type="gene designation" value="C1rl"/>
</dbReference>
<dbReference type="eggNOG" id="KOG3627">
    <property type="taxonomic scope" value="Eukaryota"/>
</dbReference>
<dbReference type="InParanoid" id="Q6IE64"/>
<dbReference type="PhylomeDB" id="Q6IE64"/>
<dbReference type="PRO" id="PR:Q6IE64"/>
<dbReference type="Proteomes" id="UP000002494">
    <property type="component" value="Unplaced"/>
</dbReference>
<dbReference type="GO" id="GO:0072562">
    <property type="term" value="C:blood microparticle"/>
    <property type="evidence" value="ECO:0000318"/>
    <property type="project" value="GO_Central"/>
</dbReference>
<dbReference type="GO" id="GO:0005615">
    <property type="term" value="C:extracellular space"/>
    <property type="evidence" value="ECO:0000266"/>
    <property type="project" value="RGD"/>
</dbReference>
<dbReference type="GO" id="GO:0004252">
    <property type="term" value="F:serine-type endopeptidase activity"/>
    <property type="evidence" value="ECO:0000318"/>
    <property type="project" value="GO_Central"/>
</dbReference>
<dbReference type="GO" id="GO:0006958">
    <property type="term" value="P:complement activation, classical pathway"/>
    <property type="evidence" value="ECO:0007669"/>
    <property type="project" value="UniProtKB-KW"/>
</dbReference>
<dbReference type="GO" id="GO:0045087">
    <property type="term" value="P:innate immune response"/>
    <property type="evidence" value="ECO:0007669"/>
    <property type="project" value="UniProtKB-KW"/>
</dbReference>
<dbReference type="GO" id="GO:0031638">
    <property type="term" value="P:zymogen activation"/>
    <property type="evidence" value="ECO:0000318"/>
    <property type="project" value="GO_Central"/>
</dbReference>
<dbReference type="CDD" id="cd00041">
    <property type="entry name" value="CUB"/>
    <property type="match status" value="1"/>
</dbReference>
<dbReference type="CDD" id="cd00190">
    <property type="entry name" value="Tryp_SPc"/>
    <property type="match status" value="1"/>
</dbReference>
<dbReference type="FunFam" id="2.40.10.10:FF:000035">
    <property type="entry name" value="Complement C1r subcomponent"/>
    <property type="match status" value="1"/>
</dbReference>
<dbReference type="FunFam" id="2.40.10.10:FF:000037">
    <property type="entry name" value="Complement C1r subcomponent"/>
    <property type="match status" value="1"/>
</dbReference>
<dbReference type="FunFam" id="2.10.70.10:FF:000165">
    <property type="entry name" value="Complement C1r subcomponent-like protein"/>
    <property type="match status" value="1"/>
</dbReference>
<dbReference type="Gene3D" id="2.10.70.10">
    <property type="entry name" value="Complement Module, domain 1"/>
    <property type="match status" value="1"/>
</dbReference>
<dbReference type="Gene3D" id="2.60.120.290">
    <property type="entry name" value="Spermadhesin, CUB domain"/>
    <property type="match status" value="1"/>
</dbReference>
<dbReference type="Gene3D" id="2.40.10.10">
    <property type="entry name" value="Trypsin-like serine proteases"/>
    <property type="match status" value="2"/>
</dbReference>
<dbReference type="InterPro" id="IPR000859">
    <property type="entry name" value="CUB_dom"/>
</dbReference>
<dbReference type="InterPro" id="IPR009003">
    <property type="entry name" value="Peptidase_S1_PA"/>
</dbReference>
<dbReference type="InterPro" id="IPR043504">
    <property type="entry name" value="Peptidase_S1_PA_chymotrypsin"/>
</dbReference>
<dbReference type="InterPro" id="IPR001314">
    <property type="entry name" value="Peptidase_S1A"/>
</dbReference>
<dbReference type="InterPro" id="IPR035914">
    <property type="entry name" value="Sperma_CUB_dom_sf"/>
</dbReference>
<dbReference type="InterPro" id="IPR001254">
    <property type="entry name" value="Trypsin_dom"/>
</dbReference>
<dbReference type="InterPro" id="IPR033116">
    <property type="entry name" value="TRYPSIN_SER"/>
</dbReference>
<dbReference type="PANTHER" id="PTHR24255:SF26">
    <property type="entry name" value="COMPLEMENT C1R SUBCOMPONENT-LIKE PROTEIN"/>
    <property type="match status" value="1"/>
</dbReference>
<dbReference type="PANTHER" id="PTHR24255">
    <property type="entry name" value="COMPLEMENT COMPONENT 1, S SUBCOMPONENT-RELATED"/>
    <property type="match status" value="1"/>
</dbReference>
<dbReference type="Pfam" id="PF00431">
    <property type="entry name" value="CUB"/>
    <property type="match status" value="1"/>
</dbReference>
<dbReference type="Pfam" id="PF00089">
    <property type="entry name" value="Trypsin"/>
    <property type="match status" value="1"/>
</dbReference>
<dbReference type="PRINTS" id="PR00722">
    <property type="entry name" value="CHYMOTRYPSIN"/>
</dbReference>
<dbReference type="SMART" id="SM00042">
    <property type="entry name" value="CUB"/>
    <property type="match status" value="1"/>
</dbReference>
<dbReference type="SMART" id="SM00020">
    <property type="entry name" value="Tryp_SPc"/>
    <property type="match status" value="1"/>
</dbReference>
<dbReference type="SUPFAM" id="SSF49854">
    <property type="entry name" value="Spermadhesin, CUB domain"/>
    <property type="match status" value="1"/>
</dbReference>
<dbReference type="SUPFAM" id="SSF50494">
    <property type="entry name" value="Trypsin-like serine proteases"/>
    <property type="match status" value="1"/>
</dbReference>
<dbReference type="PROSITE" id="PS01180">
    <property type="entry name" value="CUB"/>
    <property type="match status" value="1"/>
</dbReference>
<dbReference type="PROSITE" id="PS50240">
    <property type="entry name" value="TRYPSIN_DOM"/>
    <property type="match status" value="1"/>
</dbReference>
<dbReference type="PROSITE" id="PS00135">
    <property type="entry name" value="TRYPSIN_SER"/>
    <property type="match status" value="1"/>
</dbReference>
<gene>
    <name type="primary">C1rl</name>
</gene>
<name>C1RL_RAT</name>
<accession>Q6IE64</accession>
<comment type="function">
    <text evidence="1">Mediates the proteolytic cleavage of HP/haptoglobin in the endoplasmic reticulum.</text>
</comment>
<comment type="subcellular location">
    <subcellularLocation>
        <location evidence="1">Secreted</location>
    </subcellularLocation>
</comment>
<comment type="similarity">
    <text evidence="4">Belongs to the peptidase S1 family.</text>
</comment>
<protein>
    <recommendedName>
        <fullName>Complement C1r subcomponent-like protein</fullName>
        <shortName>C1r-LP</shortName>
        <shortName>C1r-like protein</shortName>
        <ecNumber>3.4.21.-</ecNumber>
    </recommendedName>
</protein>
<evidence type="ECO:0000250" key="1"/>
<evidence type="ECO:0000255" key="2"/>
<evidence type="ECO:0000255" key="3">
    <source>
        <dbReference type="PROSITE-ProRule" id="PRU00059"/>
    </source>
</evidence>
<evidence type="ECO:0000255" key="4">
    <source>
        <dbReference type="PROSITE-ProRule" id="PRU00274"/>
    </source>
</evidence>